<feature type="chain" id="PRO_0000047989" description="DNA-directed RNA polymerase subunit beta">
    <location>
        <begin position="1"/>
        <end position="1157"/>
    </location>
</feature>
<reference key="1">
    <citation type="submission" date="2002-02" db="EMBL/GenBank/DDBJ databases">
        <title>Analysis of conserved non-rRNA genes of Tropheryma whipplei: implications for genome structure, strain typing, and phylogenetic relationships.</title>
        <authorList>
            <person name="Maiwald M."/>
            <person name="Lepp P.W."/>
            <person name="Relman D.A."/>
        </authorList>
    </citation>
    <scope>NUCLEOTIDE SEQUENCE [GENOMIC DNA]</scope>
</reference>
<evidence type="ECO:0000255" key="1">
    <source>
        <dbReference type="HAMAP-Rule" id="MF_01321"/>
    </source>
</evidence>
<accession>P59643</accession>
<sequence>MSLFGVGFLAFAKGKRVCAIGRSSLGKISDPLEVPNLLDLQLDSFDWLIGGPRWRAALDAYRKNPSGAPIAEKSGLDEVFDEISPIEDSAGNMQLNFSKPVLEAEELSVRECRVRGRTYSAPLYVEAEFMNHDTGEIKTQTVFMGDFPLMTDKGTFVINGTERVVVSQLVRSPGVYFERTPEKNSEKDLFSGRIIPARGAWLEFEVDRHDQLGVRVDRKRRQPVIFFLRAIGMTDDEIRDAFGEFESISVQHEKNIGLSRDDALREIYRRVRPGEQASAEAGRALLENFYFTSRRFDLARVGRYKVNRKLGVDVDPTRMVLTRSDIIATIRYLAALHLGFSEVAVLNSNKSVPISTDDIDHLGNRRIRPVGELVQNQLRAGLARMERVVRERMTTQDIEAIIPQTLINVMPIVAALKEFYGTSQLSQFMDQNNPLAGLTHKRRLSALGPGGLSRERAGVEVRDVNPSHYGRMCPIETPEGPNIGLIGSLACYSRVNSFGFIETPYRRVVNGKVTDDIEYMTATQEDEHAIAQASTPLRPDNSFVDERVLVRRKGGEVEVVPADQVDYMDVSGRQMVSVATSLIPFLEHNDANRALMGSNMQRQAVPLLVTESPLVGTGMERYVAIDAGDVLIAEDPGIVGDVSADVVTVKQDDGKHRDYHVGKFVRSNQGNCYNQRVVVRSGDRVEKGTVLADGPCTDKGELSLGRNLLVAFMPWEGYNFEDAIIISQNLVKDDTLSSIHIEEHEVSTRDTKLGSEEITRDLPNVSMDYIKDLDERGIIRIGAEVGPGDILVGKVTPKGETELSAEERLLRAIFNEKSMEVRDTSLKVPHGQQGTVIDVKLFDAVDGEDKLGAGINQRVVVYIAHKRKITEGDKLAGRHGNKGVISKILPVEDMPFMADGTPVDIILNPLGVPARMNFGQVLETHLGWISKQGWKIEGDPDWAKDIRVREAQPDSRVSSPVFDGISEGEITGLFSSVFPNRDGERAVGSDGKAILYDGRTGEPFPEPISVGYMYVLKLHHLVDDKIHARSTGPYSMIIQQPLGGKAQFGGQRFGEMEVWALEAYGAAHALQELLTIKSDDVVGRVKVYDAIVKGYPIPTPGVPESFKVIVKEMQSLCINIEVVSDGEDDVSADAETLQIEEGLDTSPKVEVGSLEEV</sequence>
<protein>
    <recommendedName>
        <fullName evidence="1">DNA-directed RNA polymerase subunit beta</fullName>
        <shortName evidence="1">RNAP subunit beta</shortName>
        <ecNumber evidence="1">2.7.7.6</ecNumber>
    </recommendedName>
    <alternativeName>
        <fullName evidence="1">RNA polymerase subunit beta</fullName>
    </alternativeName>
    <alternativeName>
        <fullName evidence="1">Transcriptase subunit beta</fullName>
    </alternativeName>
</protein>
<organism>
    <name type="scientific">Tropheryma whipplei</name>
    <name type="common">Whipple's bacillus</name>
    <name type="synonym">Tropheryma whippelii</name>
    <dbReference type="NCBI Taxonomy" id="2039"/>
    <lineage>
        <taxon>Bacteria</taxon>
        <taxon>Bacillati</taxon>
        <taxon>Actinomycetota</taxon>
        <taxon>Actinomycetes</taxon>
        <taxon>Micrococcales</taxon>
        <taxon>Tropherymataceae</taxon>
        <taxon>Tropheryma</taxon>
    </lineage>
</organism>
<name>RPOB_TROWH</name>
<gene>
    <name evidence="1" type="primary">rpoB</name>
</gene>
<dbReference type="EC" id="2.7.7.6" evidence="1"/>
<dbReference type="EMBL" id="AF483653">
    <property type="protein sequence ID" value="AAO84493.1"/>
    <property type="molecule type" value="Genomic_DNA"/>
</dbReference>
<dbReference type="SMR" id="P59643"/>
<dbReference type="GO" id="GO:0000428">
    <property type="term" value="C:DNA-directed RNA polymerase complex"/>
    <property type="evidence" value="ECO:0007669"/>
    <property type="project" value="UniProtKB-KW"/>
</dbReference>
<dbReference type="GO" id="GO:0003677">
    <property type="term" value="F:DNA binding"/>
    <property type="evidence" value="ECO:0007669"/>
    <property type="project" value="UniProtKB-UniRule"/>
</dbReference>
<dbReference type="GO" id="GO:0003899">
    <property type="term" value="F:DNA-directed RNA polymerase activity"/>
    <property type="evidence" value="ECO:0007669"/>
    <property type="project" value="UniProtKB-UniRule"/>
</dbReference>
<dbReference type="GO" id="GO:0032549">
    <property type="term" value="F:ribonucleoside binding"/>
    <property type="evidence" value="ECO:0007669"/>
    <property type="project" value="InterPro"/>
</dbReference>
<dbReference type="GO" id="GO:0006351">
    <property type="term" value="P:DNA-templated transcription"/>
    <property type="evidence" value="ECO:0007669"/>
    <property type="project" value="UniProtKB-UniRule"/>
</dbReference>
<dbReference type="CDD" id="cd00653">
    <property type="entry name" value="RNA_pol_B_RPB2"/>
    <property type="match status" value="1"/>
</dbReference>
<dbReference type="Gene3D" id="2.40.50.100">
    <property type="match status" value="1"/>
</dbReference>
<dbReference type="Gene3D" id="2.40.50.150">
    <property type="match status" value="1"/>
</dbReference>
<dbReference type="Gene3D" id="3.90.1100.10">
    <property type="match status" value="1"/>
</dbReference>
<dbReference type="Gene3D" id="2.30.150.10">
    <property type="entry name" value="DNA-directed RNA polymerase, beta subunit, external 1 domain"/>
    <property type="match status" value="1"/>
</dbReference>
<dbReference type="Gene3D" id="2.40.270.10">
    <property type="entry name" value="DNA-directed RNA polymerase, subunit 2, domain 6"/>
    <property type="match status" value="1"/>
</dbReference>
<dbReference type="Gene3D" id="3.90.1800.10">
    <property type="entry name" value="RNA polymerase alpha subunit dimerisation domain"/>
    <property type="match status" value="1"/>
</dbReference>
<dbReference type="Gene3D" id="3.90.1110.10">
    <property type="entry name" value="RNA polymerase Rpb2, domain 2"/>
    <property type="match status" value="1"/>
</dbReference>
<dbReference type="HAMAP" id="MF_01321">
    <property type="entry name" value="RNApol_bact_RpoB"/>
    <property type="match status" value="1"/>
</dbReference>
<dbReference type="InterPro" id="IPR042107">
    <property type="entry name" value="DNA-dir_RNA_pol_bsu_ext_1_sf"/>
</dbReference>
<dbReference type="InterPro" id="IPR019462">
    <property type="entry name" value="DNA-dir_RNA_pol_bsu_external_1"/>
</dbReference>
<dbReference type="InterPro" id="IPR015712">
    <property type="entry name" value="DNA-dir_RNA_pol_su2"/>
</dbReference>
<dbReference type="InterPro" id="IPR007120">
    <property type="entry name" value="DNA-dir_RNAP_su2_dom"/>
</dbReference>
<dbReference type="InterPro" id="IPR037033">
    <property type="entry name" value="DNA-dir_RNAP_su2_hyb_sf"/>
</dbReference>
<dbReference type="InterPro" id="IPR010243">
    <property type="entry name" value="RNA_pol_bsu_bac"/>
</dbReference>
<dbReference type="InterPro" id="IPR007121">
    <property type="entry name" value="RNA_pol_bsu_CS"/>
</dbReference>
<dbReference type="InterPro" id="IPR007644">
    <property type="entry name" value="RNA_pol_bsu_protrusion"/>
</dbReference>
<dbReference type="InterPro" id="IPR007642">
    <property type="entry name" value="RNA_pol_Rpb2_2"/>
</dbReference>
<dbReference type="InterPro" id="IPR037034">
    <property type="entry name" value="RNA_pol_Rpb2_2_sf"/>
</dbReference>
<dbReference type="InterPro" id="IPR007645">
    <property type="entry name" value="RNA_pol_Rpb2_3"/>
</dbReference>
<dbReference type="InterPro" id="IPR007641">
    <property type="entry name" value="RNA_pol_Rpb2_7"/>
</dbReference>
<dbReference type="InterPro" id="IPR014724">
    <property type="entry name" value="RNA_pol_RPB2_OB-fold"/>
</dbReference>
<dbReference type="NCBIfam" id="NF001616">
    <property type="entry name" value="PRK00405.1"/>
    <property type="match status" value="1"/>
</dbReference>
<dbReference type="NCBIfam" id="TIGR02013">
    <property type="entry name" value="rpoB"/>
    <property type="match status" value="1"/>
</dbReference>
<dbReference type="PANTHER" id="PTHR20856">
    <property type="entry name" value="DNA-DIRECTED RNA POLYMERASE I SUBUNIT 2"/>
    <property type="match status" value="1"/>
</dbReference>
<dbReference type="Pfam" id="PF04563">
    <property type="entry name" value="RNA_pol_Rpb2_1"/>
    <property type="match status" value="1"/>
</dbReference>
<dbReference type="Pfam" id="PF04561">
    <property type="entry name" value="RNA_pol_Rpb2_2"/>
    <property type="match status" value="1"/>
</dbReference>
<dbReference type="Pfam" id="PF04565">
    <property type="entry name" value="RNA_pol_Rpb2_3"/>
    <property type="match status" value="1"/>
</dbReference>
<dbReference type="Pfam" id="PF10385">
    <property type="entry name" value="RNA_pol_Rpb2_45"/>
    <property type="match status" value="1"/>
</dbReference>
<dbReference type="Pfam" id="PF00562">
    <property type="entry name" value="RNA_pol_Rpb2_6"/>
    <property type="match status" value="1"/>
</dbReference>
<dbReference type="Pfam" id="PF04560">
    <property type="entry name" value="RNA_pol_Rpb2_7"/>
    <property type="match status" value="1"/>
</dbReference>
<dbReference type="SUPFAM" id="SSF64484">
    <property type="entry name" value="beta and beta-prime subunits of DNA dependent RNA-polymerase"/>
    <property type="match status" value="1"/>
</dbReference>
<dbReference type="PROSITE" id="PS01166">
    <property type="entry name" value="RNA_POL_BETA"/>
    <property type="match status" value="1"/>
</dbReference>
<comment type="function">
    <text evidence="1">DNA-dependent RNA polymerase catalyzes the transcription of DNA into RNA using the four ribonucleoside triphosphates as substrates.</text>
</comment>
<comment type="catalytic activity">
    <reaction evidence="1">
        <text>RNA(n) + a ribonucleoside 5'-triphosphate = RNA(n+1) + diphosphate</text>
        <dbReference type="Rhea" id="RHEA:21248"/>
        <dbReference type="Rhea" id="RHEA-COMP:14527"/>
        <dbReference type="Rhea" id="RHEA-COMP:17342"/>
        <dbReference type="ChEBI" id="CHEBI:33019"/>
        <dbReference type="ChEBI" id="CHEBI:61557"/>
        <dbReference type="ChEBI" id="CHEBI:140395"/>
        <dbReference type="EC" id="2.7.7.6"/>
    </reaction>
</comment>
<comment type="subunit">
    <text evidence="1">The RNAP catalytic core consists of 2 alpha, 1 beta, 1 beta' and 1 omega subunit. When a sigma factor is associated with the core the holoenzyme is formed, which can initiate transcription.</text>
</comment>
<comment type="similarity">
    <text evidence="1">Belongs to the RNA polymerase beta chain family.</text>
</comment>
<proteinExistence type="inferred from homology"/>
<keyword id="KW-0240">DNA-directed RNA polymerase</keyword>
<keyword id="KW-0548">Nucleotidyltransferase</keyword>
<keyword id="KW-0804">Transcription</keyword>
<keyword id="KW-0808">Transferase</keyword>